<protein>
    <recommendedName>
        <fullName>Centrosomal protein of 170 kDa protein B</fullName>
    </recommendedName>
    <alternativeName>
        <fullName>Centrosomal protein 170B</fullName>
        <shortName>Cep170B</shortName>
    </alternativeName>
</protein>
<organism>
    <name type="scientific">Xenopus tropicalis</name>
    <name type="common">Western clawed frog</name>
    <name type="synonym">Silurana tropicalis</name>
    <dbReference type="NCBI Taxonomy" id="8364"/>
    <lineage>
        <taxon>Eukaryota</taxon>
        <taxon>Metazoa</taxon>
        <taxon>Chordata</taxon>
        <taxon>Craniata</taxon>
        <taxon>Vertebrata</taxon>
        <taxon>Euteleostomi</taxon>
        <taxon>Amphibia</taxon>
        <taxon>Batrachia</taxon>
        <taxon>Anura</taxon>
        <taxon>Pipoidea</taxon>
        <taxon>Pipidae</taxon>
        <taxon>Xenopodinae</taxon>
        <taxon>Xenopus</taxon>
        <taxon>Silurana</taxon>
    </lineage>
</organism>
<comment type="function">
    <text evidence="2">Plays a role in microtubule organization.</text>
</comment>
<comment type="subcellular location">
    <subcellularLocation>
        <location evidence="1">Cytoplasm</location>
        <location evidence="1">Cytoskeleton</location>
    </subcellularLocation>
</comment>
<comment type="similarity">
    <text evidence="5">Belongs to the CEP170 family.</text>
</comment>
<gene>
    <name type="primary">cep170b</name>
</gene>
<accession>A0JM08</accession>
<dbReference type="EMBL" id="BC125690">
    <property type="protein sequence ID" value="AAI25691.1"/>
    <property type="molecule type" value="mRNA"/>
</dbReference>
<dbReference type="RefSeq" id="NP_001072723.1">
    <property type="nucleotide sequence ID" value="NM_001079255.1"/>
</dbReference>
<dbReference type="SMR" id="A0JM08"/>
<dbReference type="FunCoup" id="A0JM08">
    <property type="interactions" value="502"/>
</dbReference>
<dbReference type="STRING" id="8364.ENSXETP00000016315"/>
<dbReference type="PaxDb" id="8364-ENSXETP00000053089"/>
<dbReference type="GeneID" id="780180"/>
<dbReference type="KEGG" id="xtr:780180"/>
<dbReference type="AGR" id="Xenbase:XB-GENE-5943417"/>
<dbReference type="CTD" id="283638"/>
<dbReference type="Xenbase" id="XB-GENE-5943417">
    <property type="gene designation" value="cep170b"/>
</dbReference>
<dbReference type="eggNOG" id="ENOG502QSH8">
    <property type="taxonomic scope" value="Eukaryota"/>
</dbReference>
<dbReference type="InParanoid" id="A0JM08"/>
<dbReference type="OrthoDB" id="444265at2759"/>
<dbReference type="Proteomes" id="UP000008143">
    <property type="component" value="Chromosome 8"/>
</dbReference>
<dbReference type="Bgee" id="ENSXETG00000002232">
    <property type="expression patterns" value="Expressed in neurula embryo and 13 other cell types or tissues"/>
</dbReference>
<dbReference type="GO" id="GO:0005737">
    <property type="term" value="C:cytoplasm"/>
    <property type="evidence" value="ECO:0007669"/>
    <property type="project" value="UniProtKB-KW"/>
</dbReference>
<dbReference type="GO" id="GO:0005874">
    <property type="term" value="C:microtubule"/>
    <property type="evidence" value="ECO:0007669"/>
    <property type="project" value="UniProtKB-KW"/>
</dbReference>
<dbReference type="CDD" id="cd22725">
    <property type="entry name" value="FHA_Cep170B"/>
    <property type="match status" value="1"/>
</dbReference>
<dbReference type="Gene3D" id="2.60.200.20">
    <property type="match status" value="1"/>
</dbReference>
<dbReference type="InterPro" id="IPR051176">
    <property type="entry name" value="Cent_Immune-Sig_Mod"/>
</dbReference>
<dbReference type="InterPro" id="IPR029300">
    <property type="entry name" value="CEP170_C"/>
</dbReference>
<dbReference type="InterPro" id="IPR000253">
    <property type="entry name" value="FHA_dom"/>
</dbReference>
<dbReference type="InterPro" id="IPR008984">
    <property type="entry name" value="SMAD_FHA_dom_sf"/>
</dbReference>
<dbReference type="PANTHER" id="PTHR15715">
    <property type="entry name" value="CENTROSOMAL PROTEIN OF 170 KDA"/>
    <property type="match status" value="1"/>
</dbReference>
<dbReference type="PANTHER" id="PTHR15715:SF18">
    <property type="entry name" value="CENTROSOMAL PROTEIN OF 170 KDA PROTEIN B"/>
    <property type="match status" value="1"/>
</dbReference>
<dbReference type="Pfam" id="PF15308">
    <property type="entry name" value="CEP170_C"/>
    <property type="match status" value="1"/>
</dbReference>
<dbReference type="Pfam" id="PF00498">
    <property type="entry name" value="FHA"/>
    <property type="match status" value="1"/>
</dbReference>
<dbReference type="SMART" id="SM00240">
    <property type="entry name" value="FHA"/>
    <property type="match status" value="1"/>
</dbReference>
<dbReference type="SUPFAM" id="SSF49879">
    <property type="entry name" value="SMAD/FHA domain"/>
    <property type="match status" value="1"/>
</dbReference>
<dbReference type="PROSITE" id="PS50006">
    <property type="entry name" value="FHA_DOMAIN"/>
    <property type="match status" value="1"/>
</dbReference>
<keyword id="KW-0963">Cytoplasm</keyword>
<keyword id="KW-0206">Cytoskeleton</keyword>
<keyword id="KW-0493">Microtubule</keyword>
<keyword id="KW-1185">Reference proteome</keyword>
<name>C170B_XENTR</name>
<reference key="1">
    <citation type="submission" date="2006-10" db="EMBL/GenBank/DDBJ databases">
        <authorList>
            <consortium name="NIH - Xenopus Gene Collection (XGC) project"/>
        </authorList>
    </citation>
    <scope>NUCLEOTIDE SEQUENCE [LARGE SCALE MRNA]</scope>
    <source>
        <tissue>Testis</tissue>
    </source>
</reference>
<evidence type="ECO:0000250" key="1">
    <source>
        <dbReference type="UniProtKB" id="Q498L0"/>
    </source>
</evidence>
<evidence type="ECO:0000250" key="2">
    <source>
        <dbReference type="UniProtKB" id="Q5SW79"/>
    </source>
</evidence>
<evidence type="ECO:0000255" key="3">
    <source>
        <dbReference type="PROSITE-ProRule" id="PRU00086"/>
    </source>
</evidence>
<evidence type="ECO:0000256" key="4">
    <source>
        <dbReference type="SAM" id="MobiDB-lite"/>
    </source>
</evidence>
<evidence type="ECO:0000305" key="5"/>
<proteinExistence type="evidence at transcript level"/>
<feature type="chain" id="PRO_0000282892" description="Centrosomal protein of 170 kDa protein B">
    <location>
        <begin position="1"/>
        <end position="1628"/>
    </location>
</feature>
<feature type="domain" description="FHA" evidence="3">
    <location>
        <begin position="23"/>
        <end position="73"/>
    </location>
</feature>
<feature type="region of interest" description="Disordered" evidence="4">
    <location>
        <begin position="136"/>
        <end position="201"/>
    </location>
</feature>
<feature type="region of interest" description="Disordered" evidence="4">
    <location>
        <begin position="329"/>
        <end position="369"/>
    </location>
</feature>
<feature type="region of interest" description="Disordered" evidence="4">
    <location>
        <begin position="415"/>
        <end position="504"/>
    </location>
</feature>
<feature type="region of interest" description="Disordered" evidence="4">
    <location>
        <begin position="566"/>
        <end position="586"/>
    </location>
</feature>
<feature type="region of interest" description="Disordered" evidence="4">
    <location>
        <begin position="637"/>
        <end position="659"/>
    </location>
</feature>
<feature type="region of interest" description="Disordered" evidence="4">
    <location>
        <begin position="719"/>
        <end position="739"/>
    </location>
</feature>
<feature type="region of interest" description="Disordered" evidence="4">
    <location>
        <begin position="758"/>
        <end position="842"/>
    </location>
</feature>
<feature type="region of interest" description="Disordered" evidence="4">
    <location>
        <begin position="1005"/>
        <end position="1084"/>
    </location>
</feature>
<feature type="region of interest" description="Disordered" evidence="4">
    <location>
        <begin position="1100"/>
        <end position="1341"/>
    </location>
</feature>
<feature type="region of interest" description="Disordered" evidence="4">
    <location>
        <begin position="1379"/>
        <end position="1405"/>
    </location>
</feature>
<feature type="region of interest" description="Disordered" evidence="4">
    <location>
        <begin position="1443"/>
        <end position="1463"/>
    </location>
</feature>
<feature type="region of interest" description="Disordered" evidence="4">
    <location>
        <begin position="1560"/>
        <end position="1628"/>
    </location>
</feature>
<feature type="compositionally biased region" description="Basic and acidic residues" evidence="4">
    <location>
        <begin position="147"/>
        <end position="156"/>
    </location>
</feature>
<feature type="compositionally biased region" description="Basic and acidic residues" evidence="4">
    <location>
        <begin position="180"/>
        <end position="201"/>
    </location>
</feature>
<feature type="compositionally biased region" description="Polar residues" evidence="4">
    <location>
        <begin position="421"/>
        <end position="434"/>
    </location>
</feature>
<feature type="compositionally biased region" description="Basic and acidic residues" evidence="4">
    <location>
        <begin position="436"/>
        <end position="453"/>
    </location>
</feature>
<feature type="compositionally biased region" description="Polar residues" evidence="4">
    <location>
        <begin position="454"/>
        <end position="479"/>
    </location>
</feature>
<feature type="compositionally biased region" description="Basic and acidic residues" evidence="4">
    <location>
        <begin position="481"/>
        <end position="490"/>
    </location>
</feature>
<feature type="compositionally biased region" description="Basic and acidic residues" evidence="4">
    <location>
        <begin position="758"/>
        <end position="773"/>
    </location>
</feature>
<feature type="compositionally biased region" description="Basic and acidic residues" evidence="4">
    <location>
        <begin position="817"/>
        <end position="828"/>
    </location>
</feature>
<feature type="compositionally biased region" description="Polar residues" evidence="4">
    <location>
        <begin position="1005"/>
        <end position="1023"/>
    </location>
</feature>
<feature type="compositionally biased region" description="Basic and acidic residues" evidence="4">
    <location>
        <begin position="1045"/>
        <end position="1056"/>
    </location>
</feature>
<feature type="compositionally biased region" description="Polar residues" evidence="4">
    <location>
        <begin position="1129"/>
        <end position="1150"/>
    </location>
</feature>
<feature type="compositionally biased region" description="Low complexity" evidence="4">
    <location>
        <begin position="1176"/>
        <end position="1193"/>
    </location>
</feature>
<feature type="compositionally biased region" description="Polar residues" evidence="4">
    <location>
        <begin position="1216"/>
        <end position="1227"/>
    </location>
</feature>
<feature type="compositionally biased region" description="Low complexity" evidence="4">
    <location>
        <begin position="1261"/>
        <end position="1280"/>
    </location>
</feature>
<feature type="compositionally biased region" description="Low complexity" evidence="4">
    <location>
        <begin position="1312"/>
        <end position="1328"/>
    </location>
</feature>
<feature type="compositionally biased region" description="Low complexity" evidence="4">
    <location>
        <begin position="1381"/>
        <end position="1398"/>
    </location>
</feature>
<feature type="compositionally biased region" description="Polar residues" evidence="4">
    <location>
        <begin position="1564"/>
        <end position="1596"/>
    </location>
</feature>
<feature type="compositionally biased region" description="Low complexity" evidence="4">
    <location>
        <begin position="1606"/>
        <end position="1618"/>
    </location>
</feature>
<sequence length="1628" mass="181490">MSVTSWFLVSSSGTRHRLPREMIFVGREDCELMLQSRSVDKQHAVINYDSDKDEHRVKDLGSLNGTFVNDVRIPDQKYITLKLSDNIRFGYDINTYVLEQIQHQVPEEALKHEKYTSHLQMCLKTAAAGREDQFKEHGAHVDSAQAKQDKADKKATSDIPAYRTPLYGQPSWWGEDDDNKLDKEGRRQDEHYSERPNDMTQHEEEINGNMSYRDSQDQCVYPFRREPSYFEIPTKDFQQPVKPPETQVYEIPTKDTDAVPPVTPPVMQSHASFTIEFDDCQPGKIKIKDHVTKFSMRQRKTAGKEPAPTEMVSAESKVADWLVQNDPSLIRRPAPGEDVYSTKSDLPIHNRTLKGNRHEDGTQSDSEDPLVAQPEQEIGTPDHPQLQRQIKREPEELLHNQQAFVIQFFDDDDAPRKKRSQSFTHNANSPQNDTDPVLKAKAEKRKGTLHVEKVSTNGMGSTAPASKSLSSPSFPQRSNSFRREKTEDRISSAPTTAKLPGKNYGSVGKKSKLAQEFAAEYMREQVEVVKQAAEKPMTLPLSTSILQQPASQVQISSQAQTMQLTSDVRTGKVKNEEEDNLSDAGTYTIETETQDREVEQARKMIDQVFGVFESDEYSKIASTVYRPVIKLGEEEPLASEPSVPHKPIMSSTPPVKLSNGLPAETLIERTGSSSKQSQKWVSRWASLADSYPDASPTSPLDSQKQGLIADDEDVIERTEHQGEADPTVPSRTRRLLPQLPPENVMPTIFVCQESFSDESQRKSLEEPEKRISEENSSLLLVQEELDPDSLSDTSKSDDGVISVRKSAKASNTYRNGWKGEESHSREPSVQRTSVPSNEKKSTCFYVGNDDVGSVKQTSFGLSSKDVIKGPESHIKMKVNLHITAETPSSGKAVNQFPKKDNGSAKDPLSFVRQESFTKETSSSNVLPNKLPHISTHPLLKDLSVTKSNHDYSKETRLILKETETALAALEAKLFTQSHLDEIENTPCLRDDSLSGDSDVDTASTVSLVSDKNVPSHSQKNRIVSLQKEKSSSTSSIQEQYCQPSARERLSEKRRTVPADAGTRNVTKRLGMTRSTGARGSLDFTDEERCSSLPYMPVSETVSSDYEHSSSRHISRRKPFGQTCKDESSRSSNAQKVQQALTRSNSLSTPRPTRASKLRRARLGESSDNESADVERSNISPGTSSANSSSAKSSTETKKPSRLDILAMPRKRAGSFNVPSDSETTSSVRGMFSGRSIDQSYTSRKPAVAESKQPPKKPLPPTQKQTPRPRSSSVKYSSSSTSRRRQQGSDYVSTSEEECGSNHSTPKHKHSRASTATQTSRSSSVSRRQMPNSRQDEEEDEQEVYNNFMAQSVEIAEIARLSQTLVKDVASLAREIHDVAGDGDSQSSSGTGQSTSISSVPNTPASTISAREEIIKRSLQRTCSSQLVHHIPEASLNYQKIPPGSTGLEDFDQNMNDSREDPSKRRARNIEEVIFDNLMLNPVSHLSHTICANTEVLTEKMKILFQNTEKNWEEIEAKINSENEVPILKTSNKEISSILKELRRVQKQLEVINAIIDRSGHLDVPSSNKKTSSTILTSNPLSRTTNNSAARTESQTPGHVRNYMHKSSSSSSRSPGSSFSRDDEETYIV</sequence>